<reference key="1">
    <citation type="journal article" date="2009" name="Infect. Immun.">
        <title>Comparative genomics reveal extensive transposon-mediated genomic plasticity and diversity among potential effector proteins within the genus Coxiella.</title>
        <authorList>
            <person name="Beare P.A."/>
            <person name="Unsworth N."/>
            <person name="Andoh M."/>
            <person name="Voth D.E."/>
            <person name="Omsland A."/>
            <person name="Gilk S.D."/>
            <person name="Williams K.P."/>
            <person name="Sobral B.W."/>
            <person name="Kupko J.J. III"/>
            <person name="Porcella S.F."/>
            <person name="Samuel J.E."/>
            <person name="Heinzen R.A."/>
        </authorList>
    </citation>
    <scope>NUCLEOTIDE SEQUENCE [LARGE SCALE GENOMIC DNA]</scope>
    <source>
        <strain>CbuK_Q154</strain>
    </source>
</reference>
<keyword id="KW-0963">Cytoplasm</keyword>
<keyword id="KW-0460">Magnesium</keyword>
<keyword id="KW-0479">Metal-binding</keyword>
<keyword id="KW-0548">Nucleotidyltransferase</keyword>
<keyword id="KW-0694">RNA-binding</keyword>
<keyword id="KW-0808">Transferase</keyword>
<comment type="function">
    <text evidence="1">Involved in mRNA degradation. Catalyzes the phosphorolysis of single-stranded polyribonucleotides processively in the 3'- to 5'-direction.</text>
</comment>
<comment type="catalytic activity">
    <reaction evidence="1">
        <text>RNA(n+1) + phosphate = RNA(n) + a ribonucleoside 5'-diphosphate</text>
        <dbReference type="Rhea" id="RHEA:22096"/>
        <dbReference type="Rhea" id="RHEA-COMP:14527"/>
        <dbReference type="Rhea" id="RHEA-COMP:17342"/>
        <dbReference type="ChEBI" id="CHEBI:43474"/>
        <dbReference type="ChEBI" id="CHEBI:57930"/>
        <dbReference type="ChEBI" id="CHEBI:140395"/>
        <dbReference type="EC" id="2.7.7.8"/>
    </reaction>
</comment>
<comment type="cofactor">
    <cofactor evidence="1">
        <name>Mg(2+)</name>
        <dbReference type="ChEBI" id="CHEBI:18420"/>
    </cofactor>
</comment>
<comment type="subunit">
    <text evidence="1">Component of the RNA degradosome, which is a multiprotein complex involved in RNA processing and mRNA degradation.</text>
</comment>
<comment type="subcellular location">
    <subcellularLocation>
        <location evidence="1">Cytoplasm</location>
    </subcellularLocation>
</comment>
<comment type="similarity">
    <text evidence="1">Belongs to the polyribonucleotide nucleotidyltransferase family.</text>
</comment>
<evidence type="ECO:0000255" key="1">
    <source>
        <dbReference type="HAMAP-Rule" id="MF_01595"/>
    </source>
</evidence>
<feature type="chain" id="PRO_1000192474" description="Polyribonucleotide nucleotidyltransferase">
    <location>
        <begin position="1"/>
        <end position="696"/>
    </location>
</feature>
<feature type="domain" description="KH" evidence="1">
    <location>
        <begin position="556"/>
        <end position="615"/>
    </location>
</feature>
<feature type="domain" description="S1 motif" evidence="1">
    <location>
        <begin position="625"/>
        <end position="693"/>
    </location>
</feature>
<feature type="binding site" evidence="1">
    <location>
        <position position="489"/>
    </location>
    <ligand>
        <name>Mg(2+)</name>
        <dbReference type="ChEBI" id="CHEBI:18420"/>
    </ligand>
</feature>
<feature type="binding site" evidence="1">
    <location>
        <position position="495"/>
    </location>
    <ligand>
        <name>Mg(2+)</name>
        <dbReference type="ChEBI" id="CHEBI:18420"/>
    </ligand>
</feature>
<name>PNP_COXB1</name>
<protein>
    <recommendedName>
        <fullName evidence="1">Polyribonucleotide nucleotidyltransferase</fullName>
        <ecNumber evidence="1">2.7.7.8</ecNumber>
    </recommendedName>
    <alternativeName>
        <fullName evidence="1">Polynucleotide phosphorylase</fullName>
        <shortName evidence="1">PNPase</shortName>
    </alternativeName>
</protein>
<accession>B6J6S7</accession>
<dbReference type="EC" id="2.7.7.8" evidence="1"/>
<dbReference type="EMBL" id="CP001020">
    <property type="protein sequence ID" value="ACJ19976.1"/>
    <property type="molecule type" value="Genomic_DNA"/>
</dbReference>
<dbReference type="RefSeq" id="WP_005768841.1">
    <property type="nucleotide sequence ID" value="NC_011528.1"/>
</dbReference>
<dbReference type="SMR" id="B6J6S7"/>
<dbReference type="KEGG" id="cbc:CbuK_0720"/>
<dbReference type="HOGENOM" id="CLU_004217_2_2_6"/>
<dbReference type="GO" id="GO:0005829">
    <property type="term" value="C:cytosol"/>
    <property type="evidence" value="ECO:0007669"/>
    <property type="project" value="TreeGrafter"/>
</dbReference>
<dbReference type="GO" id="GO:0000175">
    <property type="term" value="F:3'-5'-RNA exonuclease activity"/>
    <property type="evidence" value="ECO:0007669"/>
    <property type="project" value="TreeGrafter"/>
</dbReference>
<dbReference type="GO" id="GO:0000287">
    <property type="term" value="F:magnesium ion binding"/>
    <property type="evidence" value="ECO:0007669"/>
    <property type="project" value="UniProtKB-UniRule"/>
</dbReference>
<dbReference type="GO" id="GO:0004654">
    <property type="term" value="F:polyribonucleotide nucleotidyltransferase activity"/>
    <property type="evidence" value="ECO:0007669"/>
    <property type="project" value="UniProtKB-UniRule"/>
</dbReference>
<dbReference type="GO" id="GO:0003723">
    <property type="term" value="F:RNA binding"/>
    <property type="evidence" value="ECO:0007669"/>
    <property type="project" value="UniProtKB-UniRule"/>
</dbReference>
<dbReference type="GO" id="GO:0006402">
    <property type="term" value="P:mRNA catabolic process"/>
    <property type="evidence" value="ECO:0007669"/>
    <property type="project" value="UniProtKB-UniRule"/>
</dbReference>
<dbReference type="GO" id="GO:0006396">
    <property type="term" value="P:RNA processing"/>
    <property type="evidence" value="ECO:0007669"/>
    <property type="project" value="InterPro"/>
</dbReference>
<dbReference type="CDD" id="cd02393">
    <property type="entry name" value="KH-I_PNPase"/>
    <property type="match status" value="1"/>
</dbReference>
<dbReference type="CDD" id="cd11363">
    <property type="entry name" value="RNase_PH_PNPase_1"/>
    <property type="match status" value="1"/>
</dbReference>
<dbReference type="CDD" id="cd11364">
    <property type="entry name" value="RNase_PH_PNPase_2"/>
    <property type="match status" value="1"/>
</dbReference>
<dbReference type="CDD" id="cd04472">
    <property type="entry name" value="S1_PNPase"/>
    <property type="match status" value="1"/>
</dbReference>
<dbReference type="FunFam" id="2.40.50.140:FF:000023">
    <property type="entry name" value="Polyribonucleotide nucleotidyltransferase"/>
    <property type="match status" value="1"/>
</dbReference>
<dbReference type="FunFam" id="3.30.1370.10:FF:000001">
    <property type="entry name" value="Polyribonucleotide nucleotidyltransferase"/>
    <property type="match status" value="1"/>
</dbReference>
<dbReference type="FunFam" id="3.30.230.70:FF:000001">
    <property type="entry name" value="Polyribonucleotide nucleotidyltransferase"/>
    <property type="match status" value="1"/>
</dbReference>
<dbReference type="FunFam" id="3.30.230.70:FF:000002">
    <property type="entry name" value="Polyribonucleotide nucleotidyltransferase"/>
    <property type="match status" value="1"/>
</dbReference>
<dbReference type="Gene3D" id="3.30.230.70">
    <property type="entry name" value="GHMP Kinase, N-terminal domain"/>
    <property type="match status" value="2"/>
</dbReference>
<dbReference type="Gene3D" id="3.30.1370.10">
    <property type="entry name" value="K Homology domain, type 1"/>
    <property type="match status" value="1"/>
</dbReference>
<dbReference type="Gene3D" id="2.40.50.140">
    <property type="entry name" value="Nucleic acid-binding proteins"/>
    <property type="match status" value="1"/>
</dbReference>
<dbReference type="HAMAP" id="MF_01595">
    <property type="entry name" value="PNPase"/>
    <property type="match status" value="1"/>
</dbReference>
<dbReference type="InterPro" id="IPR001247">
    <property type="entry name" value="ExoRNase_PH_dom1"/>
</dbReference>
<dbReference type="InterPro" id="IPR015847">
    <property type="entry name" value="ExoRNase_PH_dom2"/>
</dbReference>
<dbReference type="InterPro" id="IPR036345">
    <property type="entry name" value="ExoRNase_PH_dom2_sf"/>
</dbReference>
<dbReference type="InterPro" id="IPR004087">
    <property type="entry name" value="KH_dom"/>
</dbReference>
<dbReference type="InterPro" id="IPR004088">
    <property type="entry name" value="KH_dom_type_1"/>
</dbReference>
<dbReference type="InterPro" id="IPR036612">
    <property type="entry name" value="KH_dom_type_1_sf"/>
</dbReference>
<dbReference type="InterPro" id="IPR012340">
    <property type="entry name" value="NA-bd_OB-fold"/>
</dbReference>
<dbReference type="InterPro" id="IPR012162">
    <property type="entry name" value="PNPase"/>
</dbReference>
<dbReference type="InterPro" id="IPR027408">
    <property type="entry name" value="PNPase/RNase_PH_dom_sf"/>
</dbReference>
<dbReference type="InterPro" id="IPR015848">
    <property type="entry name" value="PNPase_PH_RNA-bd_bac/org-type"/>
</dbReference>
<dbReference type="InterPro" id="IPR036456">
    <property type="entry name" value="PNPase_PH_RNA-bd_sf"/>
</dbReference>
<dbReference type="InterPro" id="IPR020568">
    <property type="entry name" value="Ribosomal_Su5_D2-typ_SF"/>
</dbReference>
<dbReference type="InterPro" id="IPR003029">
    <property type="entry name" value="S1_domain"/>
</dbReference>
<dbReference type="NCBIfam" id="TIGR03591">
    <property type="entry name" value="polynuc_phos"/>
    <property type="match status" value="1"/>
</dbReference>
<dbReference type="NCBIfam" id="NF008805">
    <property type="entry name" value="PRK11824.1"/>
    <property type="match status" value="1"/>
</dbReference>
<dbReference type="PANTHER" id="PTHR11252">
    <property type="entry name" value="POLYRIBONUCLEOTIDE NUCLEOTIDYLTRANSFERASE"/>
    <property type="match status" value="1"/>
</dbReference>
<dbReference type="PANTHER" id="PTHR11252:SF0">
    <property type="entry name" value="POLYRIBONUCLEOTIDE NUCLEOTIDYLTRANSFERASE 1, MITOCHONDRIAL"/>
    <property type="match status" value="1"/>
</dbReference>
<dbReference type="Pfam" id="PF00013">
    <property type="entry name" value="KH_1"/>
    <property type="match status" value="1"/>
</dbReference>
<dbReference type="Pfam" id="PF03726">
    <property type="entry name" value="PNPase"/>
    <property type="match status" value="1"/>
</dbReference>
<dbReference type="Pfam" id="PF01138">
    <property type="entry name" value="RNase_PH"/>
    <property type="match status" value="2"/>
</dbReference>
<dbReference type="Pfam" id="PF03725">
    <property type="entry name" value="RNase_PH_C"/>
    <property type="match status" value="2"/>
</dbReference>
<dbReference type="Pfam" id="PF00575">
    <property type="entry name" value="S1"/>
    <property type="match status" value="1"/>
</dbReference>
<dbReference type="PIRSF" id="PIRSF005499">
    <property type="entry name" value="PNPase"/>
    <property type="match status" value="1"/>
</dbReference>
<dbReference type="SMART" id="SM00322">
    <property type="entry name" value="KH"/>
    <property type="match status" value="1"/>
</dbReference>
<dbReference type="SMART" id="SM00316">
    <property type="entry name" value="S1"/>
    <property type="match status" value="1"/>
</dbReference>
<dbReference type="SUPFAM" id="SSF54791">
    <property type="entry name" value="Eukaryotic type KH-domain (KH-domain type I)"/>
    <property type="match status" value="1"/>
</dbReference>
<dbReference type="SUPFAM" id="SSF50249">
    <property type="entry name" value="Nucleic acid-binding proteins"/>
    <property type="match status" value="1"/>
</dbReference>
<dbReference type="SUPFAM" id="SSF46915">
    <property type="entry name" value="Polynucleotide phosphorylase/guanosine pentaphosphate synthase (PNPase/GPSI), domain 3"/>
    <property type="match status" value="1"/>
</dbReference>
<dbReference type="SUPFAM" id="SSF55666">
    <property type="entry name" value="Ribonuclease PH domain 2-like"/>
    <property type="match status" value="2"/>
</dbReference>
<dbReference type="SUPFAM" id="SSF54211">
    <property type="entry name" value="Ribosomal protein S5 domain 2-like"/>
    <property type="match status" value="2"/>
</dbReference>
<dbReference type="PROSITE" id="PS50084">
    <property type="entry name" value="KH_TYPE_1"/>
    <property type="match status" value="1"/>
</dbReference>
<dbReference type="PROSITE" id="PS50126">
    <property type="entry name" value="S1"/>
    <property type="match status" value="1"/>
</dbReference>
<proteinExistence type="inferred from homology"/>
<sequence length="696" mass="76258">MNKIRKTFQYGKHEVTFETGEMARQATGAVVVRMGDTVLLVSVVAKKEAEEGRDFFPLTVNYQEKTYAAGKIPGGYFKREGRPTEKETLTSRLIDRPLRPLFPKGFTNEVQVIATVLSVDSKVPTDIPAILGASAAIGLSGIPFNGSLGAARVGYRGGEYLLNPSLDELKDSALDLVVAGTRDAVLMVESEAQELPESVMLGAVLHGHQAMQVAIQAIAEFIQEAGGAKWEWEPPTVNTALEKLVVEKSEAPLKKAYQIQEKTARQAQIQAIRDQLLADRAAEREGEENAVNEHELAVIFHELERRIVREQILTGQPRIDGRDTKTVRPITVKVGVLPRSHGSALFTRGETQALVVTTLGTERDAQSIDDLDGDRQEEFIFHYNFPPFCVGEVGFMSGPKRREIGHGRLAKRAVVPVVPTLDKFPYVIRVVSEILESNGSSSMASVCGSSLALMDAGVPTKAPVAGIAMGLIKENDKYAVLSDILGDEDHLGDMDFKVAGTSNGVTALQMDIKIEGITKEIMEQALDQAKEGRLHILSIMNKVLDKPRSQVSDLAPQYVTMKINPEKIRDVIGKGGVVIREITEATNCAIDISDDGTIKIAAHTTEEGEAAKRRIEELTAEVELGKVYEGTVVKITDFGAFVQILPNTQGLVHISQIAQERVENVRDYLEEGQVIRVKVIEIDRQGRVRLSMKQID</sequence>
<gene>
    <name evidence="1" type="primary">pnp</name>
    <name type="ordered locus">CbuK_0720</name>
</gene>
<organism>
    <name type="scientific">Coxiella burnetii (strain CbuK_Q154)</name>
    <name type="common">Coxiella burnetii (strain Q154)</name>
    <dbReference type="NCBI Taxonomy" id="434924"/>
    <lineage>
        <taxon>Bacteria</taxon>
        <taxon>Pseudomonadati</taxon>
        <taxon>Pseudomonadota</taxon>
        <taxon>Gammaproteobacteria</taxon>
        <taxon>Legionellales</taxon>
        <taxon>Coxiellaceae</taxon>
        <taxon>Coxiella</taxon>
    </lineage>
</organism>